<name>ARNC_SALHS</name>
<gene>
    <name evidence="1" type="primary">arnC</name>
    <name type="ordered locus">SeHA_C2538</name>
</gene>
<sequence>MFDAAPIKKVSVVIPVYNEQESLPELIRRTTTACESLGKAWEILLIDDGSSDSSAELMVKASQEADSHIISILLNRNYGQHAAIMAGFSHVSGDLIITLDADLQNPPEEIPRLVAKADEGFDVVGTVRQNRQDSLFRKSASKIINLLIQRTTGKAMGDYGCMLRAYRRPIIDTMLRCHERSTFIPILANIFARRATEIPVHHAEREFGDSKYSFMRLINLMYDLVTCLTTTPLRLLSLLGSVIAIGGFSLSVLLIVLRLALGPQWAAEGVFMLFAVLFTFIGAQFIGMGLLGEYIGRIYNDVRARPRYFVQQVIYPESTPFTEESHQ</sequence>
<reference key="1">
    <citation type="journal article" date="2011" name="J. Bacteriol.">
        <title>Comparative genomics of 28 Salmonella enterica isolates: evidence for CRISPR-mediated adaptive sublineage evolution.</title>
        <authorList>
            <person name="Fricke W.F."/>
            <person name="Mammel M.K."/>
            <person name="McDermott P.F."/>
            <person name="Tartera C."/>
            <person name="White D.G."/>
            <person name="Leclerc J.E."/>
            <person name="Ravel J."/>
            <person name="Cebula T.A."/>
        </authorList>
    </citation>
    <scope>NUCLEOTIDE SEQUENCE [LARGE SCALE GENOMIC DNA]</scope>
    <source>
        <strain>SL476</strain>
    </source>
</reference>
<keyword id="KW-0046">Antibiotic resistance</keyword>
<keyword id="KW-0997">Cell inner membrane</keyword>
<keyword id="KW-1003">Cell membrane</keyword>
<keyword id="KW-0328">Glycosyltransferase</keyword>
<keyword id="KW-0441">Lipid A biosynthesis</keyword>
<keyword id="KW-0444">Lipid biosynthesis</keyword>
<keyword id="KW-0443">Lipid metabolism</keyword>
<keyword id="KW-0448">Lipopolysaccharide biosynthesis</keyword>
<keyword id="KW-0472">Membrane</keyword>
<keyword id="KW-0808">Transferase</keyword>
<keyword id="KW-0812">Transmembrane</keyword>
<keyword id="KW-1133">Transmembrane helix</keyword>
<comment type="function">
    <text evidence="1">Catalyzes the transfer of 4-deoxy-4-formamido-L-arabinose from UDP to undecaprenyl phosphate. The modified arabinose is attached to lipid A and is required for resistance to polymyxin and cationic antimicrobial peptides.</text>
</comment>
<comment type="catalytic activity">
    <reaction evidence="1">
        <text>UDP-4-deoxy-4-formamido-beta-L-arabinose + di-trans,octa-cis-undecaprenyl phosphate = 4-deoxy-4-formamido-alpha-L-arabinopyranosyl di-trans,octa-cis-undecaprenyl phosphate + UDP</text>
        <dbReference type="Rhea" id="RHEA:27722"/>
        <dbReference type="ChEBI" id="CHEBI:58223"/>
        <dbReference type="ChEBI" id="CHEBI:58709"/>
        <dbReference type="ChEBI" id="CHEBI:58909"/>
        <dbReference type="ChEBI" id="CHEBI:60392"/>
        <dbReference type="EC" id="2.4.2.53"/>
    </reaction>
</comment>
<comment type="pathway">
    <text evidence="1">Glycolipid biosynthesis; 4-amino-4-deoxy-alpha-L-arabinose undecaprenyl phosphate biosynthesis; 4-amino-4-deoxy-alpha-L-arabinose undecaprenyl phosphate from UDP-4-deoxy-4-formamido-beta-L-arabinose and undecaprenyl phosphate: step 1/2.</text>
</comment>
<comment type="pathway">
    <text evidence="1">Bacterial outer membrane biogenesis; lipopolysaccharide biosynthesis.</text>
</comment>
<comment type="subcellular location">
    <subcellularLocation>
        <location evidence="1">Cell inner membrane</location>
        <topology evidence="1">Multi-pass membrane protein</topology>
    </subcellularLocation>
</comment>
<comment type="similarity">
    <text evidence="1">Belongs to the glycosyltransferase 2 family.</text>
</comment>
<evidence type="ECO:0000255" key="1">
    <source>
        <dbReference type="HAMAP-Rule" id="MF_01164"/>
    </source>
</evidence>
<dbReference type="EC" id="2.4.2.53" evidence="1"/>
<dbReference type="EMBL" id="CP001120">
    <property type="protein sequence ID" value="ACF66381.1"/>
    <property type="molecule type" value="Genomic_DNA"/>
</dbReference>
<dbReference type="RefSeq" id="WP_000458893.1">
    <property type="nucleotide sequence ID" value="NC_011083.1"/>
</dbReference>
<dbReference type="SMR" id="B4TBG5"/>
<dbReference type="CAZy" id="GT2">
    <property type="family name" value="Glycosyltransferase Family 2"/>
</dbReference>
<dbReference type="KEGG" id="seh:SeHA_C2538"/>
<dbReference type="HOGENOM" id="CLU_033536_0_0_6"/>
<dbReference type="UniPathway" id="UPA00030"/>
<dbReference type="UniPathway" id="UPA00036">
    <property type="reaction ID" value="UER00495"/>
</dbReference>
<dbReference type="Proteomes" id="UP000001866">
    <property type="component" value="Chromosome"/>
</dbReference>
<dbReference type="GO" id="GO:0005886">
    <property type="term" value="C:plasma membrane"/>
    <property type="evidence" value="ECO:0007669"/>
    <property type="project" value="UniProtKB-SubCell"/>
</dbReference>
<dbReference type="GO" id="GO:0016780">
    <property type="term" value="F:phosphotransferase activity, for other substituted phosphate groups"/>
    <property type="evidence" value="ECO:0007669"/>
    <property type="project" value="UniProtKB-UniRule"/>
</dbReference>
<dbReference type="GO" id="GO:0099621">
    <property type="term" value="F:undecaprenyl-phosphate 4-deoxy-4-formamido-L-arabinose transferase activity"/>
    <property type="evidence" value="ECO:0007669"/>
    <property type="project" value="UniProtKB-EC"/>
</dbReference>
<dbReference type="GO" id="GO:0036108">
    <property type="term" value="P:4-amino-4-deoxy-alpha-L-arabinopyranosyl undecaprenyl phosphate biosynthetic process"/>
    <property type="evidence" value="ECO:0007669"/>
    <property type="project" value="UniProtKB-UniRule"/>
</dbReference>
<dbReference type="GO" id="GO:0009245">
    <property type="term" value="P:lipid A biosynthetic process"/>
    <property type="evidence" value="ECO:0007669"/>
    <property type="project" value="UniProtKB-UniRule"/>
</dbReference>
<dbReference type="GO" id="GO:0009103">
    <property type="term" value="P:lipopolysaccharide biosynthetic process"/>
    <property type="evidence" value="ECO:0007669"/>
    <property type="project" value="UniProtKB-UniRule"/>
</dbReference>
<dbReference type="GO" id="GO:0046677">
    <property type="term" value="P:response to antibiotic"/>
    <property type="evidence" value="ECO:0007669"/>
    <property type="project" value="UniProtKB-KW"/>
</dbReference>
<dbReference type="CDD" id="cd04187">
    <property type="entry name" value="DPM1_like_bac"/>
    <property type="match status" value="1"/>
</dbReference>
<dbReference type="FunFam" id="3.90.550.10:FF:000019">
    <property type="entry name" value="Undecaprenyl-phosphate 4-deoxy-4-formamido-L-arabinose transferase"/>
    <property type="match status" value="1"/>
</dbReference>
<dbReference type="Gene3D" id="3.90.550.10">
    <property type="entry name" value="Spore Coat Polysaccharide Biosynthesis Protein SpsA, Chain A"/>
    <property type="match status" value="1"/>
</dbReference>
<dbReference type="HAMAP" id="MF_01164">
    <property type="entry name" value="ArnC_transfer"/>
    <property type="match status" value="1"/>
</dbReference>
<dbReference type="InterPro" id="IPR022857">
    <property type="entry name" value="ArnC_tfrase"/>
</dbReference>
<dbReference type="InterPro" id="IPR001173">
    <property type="entry name" value="Glyco_trans_2-like"/>
</dbReference>
<dbReference type="InterPro" id="IPR050256">
    <property type="entry name" value="Glycosyltransferase_2"/>
</dbReference>
<dbReference type="InterPro" id="IPR029044">
    <property type="entry name" value="Nucleotide-diphossugar_trans"/>
</dbReference>
<dbReference type="NCBIfam" id="NF007986">
    <property type="entry name" value="PRK10714.1"/>
    <property type="match status" value="1"/>
</dbReference>
<dbReference type="PANTHER" id="PTHR48090:SF3">
    <property type="entry name" value="UNDECAPRENYL-PHOSPHATE 4-DEOXY-4-FORMAMIDO-L-ARABINOSE TRANSFERASE"/>
    <property type="match status" value="1"/>
</dbReference>
<dbReference type="PANTHER" id="PTHR48090">
    <property type="entry name" value="UNDECAPRENYL-PHOSPHATE 4-DEOXY-4-FORMAMIDO-L-ARABINOSE TRANSFERASE-RELATED"/>
    <property type="match status" value="1"/>
</dbReference>
<dbReference type="Pfam" id="PF00535">
    <property type="entry name" value="Glycos_transf_2"/>
    <property type="match status" value="1"/>
</dbReference>
<dbReference type="SUPFAM" id="SSF53448">
    <property type="entry name" value="Nucleotide-diphospho-sugar transferases"/>
    <property type="match status" value="1"/>
</dbReference>
<protein>
    <recommendedName>
        <fullName evidence="1">Undecaprenyl-phosphate 4-deoxy-4-formamido-L-arabinose transferase</fullName>
        <ecNumber evidence="1">2.4.2.53</ecNumber>
    </recommendedName>
    <alternativeName>
        <fullName evidence="1">Undecaprenyl-phosphate Ara4FN transferase</fullName>
        <shortName evidence="1">Ara4FN transferase</shortName>
    </alternativeName>
</protein>
<feature type="chain" id="PRO_1000137921" description="Undecaprenyl-phosphate 4-deoxy-4-formamido-L-arabinose transferase">
    <location>
        <begin position="1"/>
        <end position="327"/>
    </location>
</feature>
<feature type="topological domain" description="Cytoplasmic" evidence="1">
    <location>
        <begin position="1"/>
        <end position="235"/>
    </location>
</feature>
<feature type="transmembrane region" description="Helical" evidence="1">
    <location>
        <begin position="236"/>
        <end position="256"/>
    </location>
</feature>
<feature type="topological domain" description="Periplasmic" evidence="1">
    <location>
        <begin position="257"/>
        <end position="269"/>
    </location>
</feature>
<feature type="transmembrane region" description="Helical" evidence="1">
    <location>
        <begin position="270"/>
        <end position="290"/>
    </location>
</feature>
<feature type="topological domain" description="Cytoplasmic" evidence="1">
    <location>
        <begin position="291"/>
        <end position="327"/>
    </location>
</feature>
<accession>B4TBG5</accession>
<proteinExistence type="inferred from homology"/>
<organism>
    <name type="scientific">Salmonella heidelberg (strain SL476)</name>
    <dbReference type="NCBI Taxonomy" id="454169"/>
    <lineage>
        <taxon>Bacteria</taxon>
        <taxon>Pseudomonadati</taxon>
        <taxon>Pseudomonadota</taxon>
        <taxon>Gammaproteobacteria</taxon>
        <taxon>Enterobacterales</taxon>
        <taxon>Enterobacteriaceae</taxon>
        <taxon>Salmonella</taxon>
    </lineage>
</organism>